<organism>
    <name type="scientific">Danio rerio</name>
    <name type="common">Zebrafish</name>
    <name type="synonym">Brachydanio rerio</name>
    <dbReference type="NCBI Taxonomy" id="7955"/>
    <lineage>
        <taxon>Eukaryota</taxon>
        <taxon>Metazoa</taxon>
        <taxon>Chordata</taxon>
        <taxon>Craniata</taxon>
        <taxon>Vertebrata</taxon>
        <taxon>Euteleostomi</taxon>
        <taxon>Actinopterygii</taxon>
        <taxon>Neopterygii</taxon>
        <taxon>Teleostei</taxon>
        <taxon>Ostariophysi</taxon>
        <taxon>Cypriniformes</taxon>
        <taxon>Danionidae</taxon>
        <taxon>Danioninae</taxon>
        <taxon>Danio</taxon>
    </lineage>
</organism>
<name>DLG2_DANRE</name>
<comment type="function">
    <text>May play a role in synapse assembly and function.</text>
</comment>
<comment type="subcellular location">
    <subcellularLocation>
        <location evidence="3">Cell membrane</location>
        <topology evidence="2">Lipid-anchor</topology>
    </subcellularLocation>
    <subcellularLocation>
        <location evidence="2">Postsynaptic density</location>
    </subcellularLocation>
    <subcellularLocation>
        <location evidence="1">Synapse</location>
    </subcellularLocation>
    <subcellularLocation>
        <location evidence="2">Membrane</location>
    </subcellularLocation>
    <subcellularLocation>
        <location evidence="2">Cell projection</location>
        <location evidence="2">Axon</location>
    </subcellularLocation>
    <subcellularLocation>
        <location evidence="2">Perikaryon</location>
    </subcellularLocation>
</comment>
<comment type="developmental stage">
    <text evidence="8">At 4 days-post-fertilization (dpf), expressed strongly in the inner and outer plexiform layers and ganglion cell layer of the retina, in the tegmentum and in the hindbrain. Also expressed diffusely in the diencephalon.</text>
</comment>
<comment type="similarity">
    <text evidence="9">Belongs to the MAGUK family.</text>
</comment>
<keyword id="KW-1003">Cell membrane</keyword>
<keyword id="KW-0966">Cell projection</keyword>
<keyword id="KW-0449">Lipoprotein</keyword>
<keyword id="KW-0472">Membrane</keyword>
<keyword id="KW-1185">Reference proteome</keyword>
<keyword id="KW-0677">Repeat</keyword>
<keyword id="KW-0728">SH3 domain</keyword>
<keyword id="KW-0770">Synapse</keyword>
<dbReference type="EMBL" id="AY819033">
    <property type="protein sequence ID" value="AAV68498.1"/>
    <property type="molecule type" value="mRNA"/>
</dbReference>
<dbReference type="RefSeq" id="NP_001012378.1">
    <property type="nucleotide sequence ID" value="NM_001012378.3"/>
</dbReference>
<dbReference type="SMR" id="Q5PYH7"/>
<dbReference type="FunCoup" id="Q5PYH7">
    <property type="interactions" value="1536"/>
</dbReference>
<dbReference type="STRING" id="7955.ENSDARP00000137797"/>
<dbReference type="PaxDb" id="7955-ENSDARP00000073282"/>
<dbReference type="ABCD" id="Q5PYH7">
    <property type="antibodies" value="1 sequenced antibody"/>
</dbReference>
<dbReference type="GeneID" id="497638"/>
<dbReference type="KEGG" id="dre:497638"/>
<dbReference type="AGR" id="ZFIN:ZDB-GENE-050221-3"/>
<dbReference type="CTD" id="1740"/>
<dbReference type="ZFIN" id="ZDB-GENE-050221-3">
    <property type="gene designation" value="dlg2"/>
</dbReference>
<dbReference type="eggNOG" id="KOG0708">
    <property type="taxonomic scope" value="Eukaryota"/>
</dbReference>
<dbReference type="InParanoid" id="Q5PYH7"/>
<dbReference type="OrthoDB" id="78824at2759"/>
<dbReference type="PhylomeDB" id="Q5PYH7"/>
<dbReference type="TreeFam" id="TF323171"/>
<dbReference type="Reactome" id="R-DRE-438066">
    <property type="pathway name" value="Unblocking of NMDA receptors, glutamate binding and activation"/>
</dbReference>
<dbReference type="PRO" id="PR:Q5PYH7"/>
<dbReference type="Proteomes" id="UP000000437">
    <property type="component" value="Chromosome 10"/>
</dbReference>
<dbReference type="GO" id="GO:0030424">
    <property type="term" value="C:axon"/>
    <property type="evidence" value="ECO:0007669"/>
    <property type="project" value="UniProtKB-SubCell"/>
</dbReference>
<dbReference type="GO" id="GO:0016323">
    <property type="term" value="C:basolateral plasma membrane"/>
    <property type="evidence" value="ECO:0000318"/>
    <property type="project" value="GO_Central"/>
</dbReference>
<dbReference type="GO" id="GO:0031594">
    <property type="term" value="C:neuromuscular junction"/>
    <property type="evidence" value="ECO:0000318"/>
    <property type="project" value="GO_Central"/>
</dbReference>
<dbReference type="GO" id="GO:0043005">
    <property type="term" value="C:neuron projection"/>
    <property type="evidence" value="ECO:0000318"/>
    <property type="project" value="GO_Central"/>
</dbReference>
<dbReference type="GO" id="GO:0043204">
    <property type="term" value="C:perikaryon"/>
    <property type="evidence" value="ECO:0007669"/>
    <property type="project" value="UniProtKB-SubCell"/>
</dbReference>
<dbReference type="GO" id="GO:0098839">
    <property type="term" value="C:postsynaptic density membrane"/>
    <property type="evidence" value="ECO:0000318"/>
    <property type="project" value="GO_Central"/>
</dbReference>
<dbReference type="GO" id="GO:0035255">
    <property type="term" value="F:ionotropic glutamate receptor binding"/>
    <property type="evidence" value="ECO:0000318"/>
    <property type="project" value="GO_Central"/>
</dbReference>
<dbReference type="GO" id="GO:0019901">
    <property type="term" value="F:protein kinase binding"/>
    <property type="evidence" value="ECO:0000318"/>
    <property type="project" value="GO_Central"/>
</dbReference>
<dbReference type="GO" id="GO:0098609">
    <property type="term" value="P:cell-cell adhesion"/>
    <property type="evidence" value="ECO:0000318"/>
    <property type="project" value="GO_Central"/>
</dbReference>
<dbReference type="GO" id="GO:0007268">
    <property type="term" value="P:chemical synaptic transmission"/>
    <property type="evidence" value="ECO:0000318"/>
    <property type="project" value="GO_Central"/>
</dbReference>
<dbReference type="GO" id="GO:0045197">
    <property type="term" value="P:establishment or maintenance of epithelial cell apical/basal polarity"/>
    <property type="evidence" value="ECO:0000318"/>
    <property type="project" value="GO_Central"/>
</dbReference>
<dbReference type="GO" id="GO:0007399">
    <property type="term" value="P:nervous system development"/>
    <property type="evidence" value="ECO:0000318"/>
    <property type="project" value="GO_Central"/>
</dbReference>
<dbReference type="GO" id="GO:0035418">
    <property type="term" value="P:protein localization to synapse"/>
    <property type="evidence" value="ECO:0000318"/>
    <property type="project" value="GO_Central"/>
</dbReference>
<dbReference type="GO" id="GO:0043113">
    <property type="term" value="P:receptor clustering"/>
    <property type="evidence" value="ECO:0000318"/>
    <property type="project" value="GO_Central"/>
</dbReference>
<dbReference type="GO" id="GO:0097120">
    <property type="term" value="P:receptor localization to synapse"/>
    <property type="evidence" value="ECO:0000318"/>
    <property type="project" value="GO_Central"/>
</dbReference>
<dbReference type="GO" id="GO:0099072">
    <property type="term" value="P:regulation of postsynaptic membrane neurotransmitter receptor levels"/>
    <property type="evidence" value="ECO:0000318"/>
    <property type="project" value="GO_Central"/>
</dbReference>
<dbReference type="GO" id="GO:0050808">
    <property type="term" value="P:synapse organization"/>
    <property type="evidence" value="ECO:0000303"/>
    <property type="project" value="UniProtKB"/>
</dbReference>
<dbReference type="CDD" id="cd06723">
    <property type="entry name" value="PDZ1_Dlg1-2-4-like"/>
    <property type="match status" value="1"/>
</dbReference>
<dbReference type="CDD" id="cd06724">
    <property type="entry name" value="PDZ2_Dlg1-2-4-like"/>
    <property type="match status" value="1"/>
</dbReference>
<dbReference type="CDD" id="cd06795">
    <property type="entry name" value="PDZ3_Dlg1-2-4-like"/>
    <property type="match status" value="1"/>
</dbReference>
<dbReference type="CDD" id="cd12032">
    <property type="entry name" value="SH3_DLG2"/>
    <property type="match status" value="1"/>
</dbReference>
<dbReference type="FunFam" id="3.40.50.300:FF:001402">
    <property type="entry name" value="Discs, large homolog 3 (Drosophila)"/>
    <property type="match status" value="1"/>
</dbReference>
<dbReference type="FunFam" id="2.30.30.40:FF:000008">
    <property type="entry name" value="Disks large homolog 1 isoform 2"/>
    <property type="match status" value="1"/>
</dbReference>
<dbReference type="FunFam" id="2.30.42.10:FF:000001">
    <property type="entry name" value="Disks large homolog 1 isoform 2"/>
    <property type="match status" value="1"/>
</dbReference>
<dbReference type="FunFam" id="3.30.63.10:FF:000001">
    <property type="entry name" value="Disks large homolog 1 isoform 2"/>
    <property type="match status" value="1"/>
</dbReference>
<dbReference type="FunFam" id="2.30.42.10:FF:000091">
    <property type="entry name" value="disks large homolog 1 isoform X8"/>
    <property type="match status" value="1"/>
</dbReference>
<dbReference type="FunFam" id="2.30.30.40:FF:000027">
    <property type="entry name" value="Disks large homolog 3 isoform 1"/>
    <property type="match status" value="1"/>
</dbReference>
<dbReference type="FunFam" id="2.30.42.10:FF:000002">
    <property type="entry name" value="Disks large homolog 4 isoform 2"/>
    <property type="match status" value="1"/>
</dbReference>
<dbReference type="Gene3D" id="2.30.42.10">
    <property type="match status" value="3"/>
</dbReference>
<dbReference type="Gene3D" id="3.30.63.10">
    <property type="entry name" value="Guanylate Kinase phosphate binding domain"/>
    <property type="match status" value="1"/>
</dbReference>
<dbReference type="Gene3D" id="3.40.50.300">
    <property type="entry name" value="P-loop containing nucleotide triphosphate hydrolases"/>
    <property type="match status" value="1"/>
</dbReference>
<dbReference type="Gene3D" id="2.30.30.40">
    <property type="entry name" value="SH3 Domains"/>
    <property type="match status" value="1"/>
</dbReference>
<dbReference type="InterPro" id="IPR019583">
    <property type="entry name" value="DLG1-4_PDZ_assoc"/>
</dbReference>
<dbReference type="InterPro" id="IPR016313">
    <property type="entry name" value="DLG1-like"/>
</dbReference>
<dbReference type="InterPro" id="IPR019590">
    <property type="entry name" value="DLG1_PEST_dom"/>
</dbReference>
<dbReference type="InterPro" id="IPR035759">
    <property type="entry name" value="DLG2_SH3"/>
</dbReference>
<dbReference type="InterPro" id="IPR008145">
    <property type="entry name" value="GK/Ca_channel_bsu"/>
</dbReference>
<dbReference type="InterPro" id="IPR008144">
    <property type="entry name" value="Guanylate_kin-like_dom"/>
</dbReference>
<dbReference type="InterPro" id="IPR020590">
    <property type="entry name" value="Guanylate_kinase_CS"/>
</dbReference>
<dbReference type="InterPro" id="IPR027417">
    <property type="entry name" value="P-loop_NTPase"/>
</dbReference>
<dbReference type="InterPro" id="IPR001478">
    <property type="entry name" value="PDZ"/>
</dbReference>
<dbReference type="InterPro" id="IPR036034">
    <property type="entry name" value="PDZ_sf"/>
</dbReference>
<dbReference type="InterPro" id="IPR036028">
    <property type="entry name" value="SH3-like_dom_sf"/>
</dbReference>
<dbReference type="InterPro" id="IPR001452">
    <property type="entry name" value="SH3_domain"/>
</dbReference>
<dbReference type="InterPro" id="IPR050614">
    <property type="entry name" value="Synaptic_Scaffolding_LAP-MAGUK"/>
</dbReference>
<dbReference type="PANTHER" id="PTHR23119">
    <property type="entry name" value="DISCS LARGE"/>
    <property type="match status" value="1"/>
</dbReference>
<dbReference type="PANTHER" id="PTHR23119:SF6">
    <property type="entry name" value="DISKS LARGE HOMOLOG 2"/>
    <property type="match status" value="1"/>
</dbReference>
<dbReference type="Pfam" id="PF00625">
    <property type="entry name" value="Guanylate_kin"/>
    <property type="match status" value="1"/>
</dbReference>
<dbReference type="Pfam" id="PF10608">
    <property type="entry name" value="MAGUK_N_PEST"/>
    <property type="match status" value="1"/>
</dbReference>
<dbReference type="Pfam" id="PF00595">
    <property type="entry name" value="PDZ"/>
    <property type="match status" value="3"/>
</dbReference>
<dbReference type="Pfam" id="PF10600">
    <property type="entry name" value="PDZ_assoc"/>
    <property type="match status" value="1"/>
</dbReference>
<dbReference type="Pfam" id="PF00018">
    <property type="entry name" value="SH3_1"/>
    <property type="match status" value="1"/>
</dbReference>
<dbReference type="PIRSF" id="PIRSF001741">
    <property type="entry name" value="MAGUK_DLGH"/>
    <property type="match status" value="1"/>
</dbReference>
<dbReference type="SMART" id="SM00072">
    <property type="entry name" value="GuKc"/>
    <property type="match status" value="1"/>
</dbReference>
<dbReference type="SMART" id="SM01277">
    <property type="entry name" value="MAGUK_N_PEST"/>
    <property type="match status" value="1"/>
</dbReference>
<dbReference type="SMART" id="SM00228">
    <property type="entry name" value="PDZ"/>
    <property type="match status" value="3"/>
</dbReference>
<dbReference type="SMART" id="SM00326">
    <property type="entry name" value="SH3"/>
    <property type="match status" value="1"/>
</dbReference>
<dbReference type="SUPFAM" id="SSF52540">
    <property type="entry name" value="P-loop containing nucleoside triphosphate hydrolases"/>
    <property type="match status" value="1"/>
</dbReference>
<dbReference type="SUPFAM" id="SSF50156">
    <property type="entry name" value="PDZ domain-like"/>
    <property type="match status" value="3"/>
</dbReference>
<dbReference type="SUPFAM" id="SSF50044">
    <property type="entry name" value="SH3-domain"/>
    <property type="match status" value="1"/>
</dbReference>
<dbReference type="PROSITE" id="PS00856">
    <property type="entry name" value="GUANYLATE_KINASE_1"/>
    <property type="match status" value="1"/>
</dbReference>
<dbReference type="PROSITE" id="PS50052">
    <property type="entry name" value="GUANYLATE_KINASE_2"/>
    <property type="match status" value="1"/>
</dbReference>
<dbReference type="PROSITE" id="PS50106">
    <property type="entry name" value="PDZ"/>
    <property type="match status" value="3"/>
</dbReference>
<dbReference type="PROSITE" id="PS50002">
    <property type="entry name" value="SH3"/>
    <property type="match status" value="1"/>
</dbReference>
<feature type="chain" id="PRO_0000094556" description="Disks large homolog 2">
    <location>
        <begin position="1"/>
        <end position="881"/>
    </location>
</feature>
<feature type="domain" description="PDZ 1" evidence="5">
    <location>
        <begin position="155"/>
        <end position="242"/>
    </location>
</feature>
<feature type="domain" description="PDZ 2" evidence="5">
    <location>
        <begin position="250"/>
        <end position="337"/>
    </location>
</feature>
<feature type="domain" description="PDZ 3" evidence="5">
    <location>
        <begin position="424"/>
        <end position="505"/>
    </location>
</feature>
<feature type="domain" description="SH3" evidence="6">
    <location>
        <begin position="539"/>
        <end position="609"/>
    </location>
</feature>
<feature type="domain" description="Guanylate kinase-like" evidence="4">
    <location>
        <begin position="683"/>
        <end position="866"/>
    </location>
</feature>
<feature type="region of interest" description="Disordered" evidence="7">
    <location>
        <begin position="16"/>
        <end position="41"/>
    </location>
</feature>
<feature type="region of interest" description="Disordered" evidence="7">
    <location>
        <begin position="63"/>
        <end position="88"/>
    </location>
</feature>
<feature type="region of interest" description="Disordered" evidence="7">
    <location>
        <begin position="709"/>
        <end position="729"/>
    </location>
</feature>
<accession>Q5PYH7</accession>
<proteinExistence type="evidence at transcript level"/>
<protein>
    <recommendedName>
        <fullName>Disks large homolog 2</fullName>
    </recommendedName>
    <alternativeName>
        <fullName>Postsynaptic density protein 93</fullName>
        <shortName>PSD-93</shortName>
    </alternativeName>
</protein>
<reference key="1">
    <citation type="journal article" date="2005" name="J. Neurobiol.">
        <title>Characterization of zebrafish PSD-95 gene family members.</title>
        <authorList>
            <person name="Meyer M.P."/>
            <person name="Trimmer J.S."/>
            <person name="Gilthorpe J.D."/>
            <person name="Smith S.J."/>
        </authorList>
    </citation>
    <scope>NUCLEOTIDE SEQUENCE [MRNA]</scope>
    <scope>DEVELOPMENTAL STAGE</scope>
</reference>
<evidence type="ECO:0000250" key="1"/>
<evidence type="ECO:0000250" key="2">
    <source>
        <dbReference type="UniProtKB" id="Q63622"/>
    </source>
</evidence>
<evidence type="ECO:0000250" key="3">
    <source>
        <dbReference type="UniProtKB" id="Q91XM9"/>
    </source>
</evidence>
<evidence type="ECO:0000255" key="4">
    <source>
        <dbReference type="PROSITE-ProRule" id="PRU00100"/>
    </source>
</evidence>
<evidence type="ECO:0000255" key="5">
    <source>
        <dbReference type="PROSITE-ProRule" id="PRU00143"/>
    </source>
</evidence>
<evidence type="ECO:0000255" key="6">
    <source>
        <dbReference type="PROSITE-ProRule" id="PRU00192"/>
    </source>
</evidence>
<evidence type="ECO:0000256" key="7">
    <source>
        <dbReference type="SAM" id="MobiDB-lite"/>
    </source>
</evidence>
<evidence type="ECO:0000269" key="8">
    <source>
    </source>
</evidence>
<evidence type="ECO:0000305" key="9"/>
<gene>
    <name type="primary">dlg2</name>
</gene>
<sequence length="881" mass="98508">MKAVVRVLKLEERAVHRQQNRPPAVQGSQHQSHSPACMNPALMSSPWVRQKHGGRAIPNRLCLSTTDSPHSYRYQDDDSPPPEHSFPRLTNEVRAPELVHVSEKNLSEIENVHGYVSHSHISPLKASPAPIIVNTDTLESVPYVNGTEIEYEFEEITLERGNSGLGFSIAGGTDNPHIGDDPGIFITKIIPGGAAAEDGRLRVNDCILRVNESDVSEVSHSKAVEALKAAGSIVRLYVRRRRPMLETVTEIKLIKGPKGLGFSIAGGVGNQHIPGDNSIYVTKIIDGGAAQKDGRLQVGDRLLMVNNYTLEEVTHEEAVAILKNTSDVVYLKVGKPTSVYLSDPYGPPDITHSFSPAMENHISSPGNNGTLEYKSSLPPISPGRYSPLPKHLLGEEDINRNPSLDEMEGHRFDSQHFQLREPRKIVLHKGSTGLGFNIVGGEDGEGIFVSFILAGGPADLSGELRRGDQILSVNGIDLRGATHEQAAAALKGAGQTVTIIAQYRPEEYGRFEAKIHDLREQMMNHSMSSGSGSLRTNQKRSLYVRALFDYERAKDSGLPSQGLSFRYGDILHVINASDDEWWQARRVTPEGDSEEMGVIPSKRRVERKERARLKTVKFNAKPGSLDSKGSFSEKRRKNFIFSRKFPFYKNKDADEQDGSDSERSQEELILSYEPVIRQEINYARPVIILGPMKDRINDDLISEFPDKFGSCVPPANSSDQEDTTRPKRDYEVDGRDYHFMASREQMEKDIQEHKFIEAGQYNDNLYGTSVQSVKYVAERGKHCILDVSGNAIKRLQVAQLYPIAIFIKPRSIESLMEMNKRLTEEQAKKTYDRAMKLEQEFGEYFTALVQGDTLEDIYNQCKMVIEEQSGPYIWIPSKEKL</sequence>